<dbReference type="EC" id="2.4.2.8" evidence="3"/>
<dbReference type="EMBL" id="CP000024">
    <property type="protein sequence ID" value="AAV61630.1"/>
    <property type="molecule type" value="Genomic_DNA"/>
</dbReference>
<dbReference type="RefSeq" id="WP_002948598.1">
    <property type="nucleotide sequence ID" value="NC_006449.1"/>
</dbReference>
<dbReference type="SMR" id="Q5M216"/>
<dbReference type="GeneID" id="66897915"/>
<dbReference type="KEGG" id="stc:str0011"/>
<dbReference type="HOGENOM" id="CLU_073615_0_0_9"/>
<dbReference type="UniPathway" id="UPA00591">
    <property type="reaction ID" value="UER00648"/>
</dbReference>
<dbReference type="UniPathway" id="UPA00909">
    <property type="reaction ID" value="UER00887"/>
</dbReference>
<dbReference type="GO" id="GO:0005829">
    <property type="term" value="C:cytosol"/>
    <property type="evidence" value="ECO:0007669"/>
    <property type="project" value="TreeGrafter"/>
</dbReference>
<dbReference type="GO" id="GO:0052657">
    <property type="term" value="F:guanine phosphoribosyltransferase activity"/>
    <property type="evidence" value="ECO:0007669"/>
    <property type="project" value="RHEA"/>
</dbReference>
<dbReference type="GO" id="GO:0004422">
    <property type="term" value="F:hypoxanthine phosphoribosyltransferase activity"/>
    <property type="evidence" value="ECO:0007669"/>
    <property type="project" value="InterPro"/>
</dbReference>
<dbReference type="GO" id="GO:0000287">
    <property type="term" value="F:magnesium ion binding"/>
    <property type="evidence" value="ECO:0007669"/>
    <property type="project" value="TreeGrafter"/>
</dbReference>
<dbReference type="GO" id="GO:0000166">
    <property type="term" value="F:nucleotide binding"/>
    <property type="evidence" value="ECO:0007669"/>
    <property type="project" value="UniProtKB-KW"/>
</dbReference>
<dbReference type="GO" id="GO:0032263">
    <property type="term" value="P:GMP salvage"/>
    <property type="evidence" value="ECO:0007669"/>
    <property type="project" value="UniProtKB-UniPathway"/>
</dbReference>
<dbReference type="GO" id="GO:0006178">
    <property type="term" value="P:guanine salvage"/>
    <property type="evidence" value="ECO:0007669"/>
    <property type="project" value="TreeGrafter"/>
</dbReference>
<dbReference type="GO" id="GO:0046100">
    <property type="term" value="P:hypoxanthine metabolic process"/>
    <property type="evidence" value="ECO:0007669"/>
    <property type="project" value="TreeGrafter"/>
</dbReference>
<dbReference type="GO" id="GO:0032264">
    <property type="term" value="P:IMP salvage"/>
    <property type="evidence" value="ECO:0007669"/>
    <property type="project" value="UniProtKB-UniPathway"/>
</dbReference>
<dbReference type="GO" id="GO:0006166">
    <property type="term" value="P:purine ribonucleoside salvage"/>
    <property type="evidence" value="ECO:0007669"/>
    <property type="project" value="UniProtKB-KW"/>
</dbReference>
<dbReference type="CDD" id="cd06223">
    <property type="entry name" value="PRTases_typeI"/>
    <property type="match status" value="1"/>
</dbReference>
<dbReference type="FunFam" id="3.40.50.2020:FF:000006">
    <property type="entry name" value="Hypoxanthine phosphoribosyltransferase"/>
    <property type="match status" value="1"/>
</dbReference>
<dbReference type="Gene3D" id="3.40.50.2020">
    <property type="match status" value="1"/>
</dbReference>
<dbReference type="InterPro" id="IPR050408">
    <property type="entry name" value="HGPRT"/>
</dbReference>
<dbReference type="InterPro" id="IPR005904">
    <property type="entry name" value="Hxn_phspho_trans"/>
</dbReference>
<dbReference type="InterPro" id="IPR000836">
    <property type="entry name" value="PRibTrfase_dom"/>
</dbReference>
<dbReference type="InterPro" id="IPR029057">
    <property type="entry name" value="PRTase-like"/>
</dbReference>
<dbReference type="NCBIfam" id="TIGR01203">
    <property type="entry name" value="HGPRTase"/>
    <property type="match status" value="1"/>
</dbReference>
<dbReference type="PANTHER" id="PTHR43340:SF1">
    <property type="entry name" value="HYPOXANTHINE PHOSPHORIBOSYLTRANSFERASE"/>
    <property type="match status" value="1"/>
</dbReference>
<dbReference type="PANTHER" id="PTHR43340">
    <property type="entry name" value="HYPOXANTHINE-GUANINE PHOSPHORIBOSYLTRANSFERASE"/>
    <property type="match status" value="1"/>
</dbReference>
<dbReference type="Pfam" id="PF00156">
    <property type="entry name" value="Pribosyltran"/>
    <property type="match status" value="1"/>
</dbReference>
<dbReference type="SUPFAM" id="SSF53271">
    <property type="entry name" value="PRTase-like"/>
    <property type="match status" value="1"/>
</dbReference>
<name>HGPRT_STRT1</name>
<keyword id="KW-0963">Cytoplasm</keyword>
<keyword id="KW-0328">Glycosyltransferase</keyword>
<keyword id="KW-0460">Magnesium</keyword>
<keyword id="KW-0479">Metal-binding</keyword>
<keyword id="KW-0547">Nucleotide-binding</keyword>
<keyword id="KW-0660">Purine salvage</keyword>
<keyword id="KW-0808">Transferase</keyword>
<sequence>MLEKDIKKILFSQEDIVTKTKELGQQLTKDYAGKNPLLVCVLKGAVPFMAELIKHIDTHIEMDFMVVSSYGGGTVSSGEVKILKDVDTNIEGRDVIFIEDIIDTGRTLLYLRDMFKYRKASSVKIATLFDKPEGRVVDIEADYVCYDVPNEFIVGFGLDYDEKYRNLPYVGVLKEEIYNK</sequence>
<feature type="chain" id="PRO_0000139629" description="Hypoxanthine-guanine phosphoribosyltransferase">
    <location>
        <begin position="1"/>
        <end position="180"/>
    </location>
</feature>
<feature type="active site" description="Proton acceptor" evidence="2">
    <location>
        <position position="103"/>
    </location>
</feature>
<feature type="binding site" evidence="3">
    <location>
        <position position="43"/>
    </location>
    <ligand>
        <name>diphosphate</name>
        <dbReference type="ChEBI" id="CHEBI:33019"/>
    </ligand>
</feature>
<feature type="binding site" evidence="3">
    <location>
        <position position="44"/>
    </location>
    <ligand>
        <name>diphosphate</name>
        <dbReference type="ChEBI" id="CHEBI:33019"/>
    </ligand>
</feature>
<feature type="binding site" evidence="3">
    <location>
        <position position="99"/>
    </location>
    <ligand>
        <name>Mg(2+)</name>
        <dbReference type="ChEBI" id="CHEBI:18420"/>
    </ligand>
</feature>
<feature type="binding site" evidence="3">
    <location>
        <position position="100"/>
    </location>
    <ligand>
        <name>Mg(2+)</name>
        <dbReference type="ChEBI" id="CHEBI:18420"/>
    </ligand>
</feature>
<feature type="binding site" evidence="3">
    <location>
        <position position="131"/>
    </location>
    <ligand>
        <name>GMP</name>
        <dbReference type="ChEBI" id="CHEBI:58115"/>
    </ligand>
</feature>
<feature type="binding site" evidence="3">
    <location>
        <begin position="152"/>
        <end position="153"/>
    </location>
    <ligand>
        <name>GMP</name>
        <dbReference type="ChEBI" id="CHEBI:58115"/>
    </ligand>
</feature>
<feature type="binding site" evidence="3">
    <location>
        <position position="159"/>
    </location>
    <ligand>
        <name>GMP</name>
        <dbReference type="ChEBI" id="CHEBI:58115"/>
    </ligand>
</feature>
<feature type="binding site" evidence="3">
    <location>
        <position position="165"/>
    </location>
    <ligand>
        <name>diphosphate</name>
        <dbReference type="ChEBI" id="CHEBI:33019"/>
    </ligand>
</feature>
<gene>
    <name type="primary">hpt</name>
    <name type="ordered locus">str0011</name>
</gene>
<evidence type="ECO:0000250" key="1"/>
<evidence type="ECO:0000250" key="2">
    <source>
        <dbReference type="UniProtKB" id="P0A9M2"/>
    </source>
</evidence>
<evidence type="ECO:0000250" key="3">
    <source>
        <dbReference type="UniProtKB" id="P9WHQ9"/>
    </source>
</evidence>
<evidence type="ECO:0000305" key="4"/>
<reference key="1">
    <citation type="journal article" date="2004" name="Nat. Biotechnol.">
        <title>Complete sequence and comparative genome analysis of the dairy bacterium Streptococcus thermophilus.</title>
        <authorList>
            <person name="Bolotin A."/>
            <person name="Quinquis B."/>
            <person name="Renault P."/>
            <person name="Sorokin A."/>
            <person name="Ehrlich S.D."/>
            <person name="Kulakauskas S."/>
            <person name="Lapidus A."/>
            <person name="Goltsman E."/>
            <person name="Mazur M."/>
            <person name="Pusch G.D."/>
            <person name="Fonstein M."/>
            <person name="Overbeek R."/>
            <person name="Kyprides N."/>
            <person name="Purnelle B."/>
            <person name="Prozzi D."/>
            <person name="Ngui K."/>
            <person name="Masuy D."/>
            <person name="Hancy F."/>
            <person name="Burteau S."/>
            <person name="Boutry M."/>
            <person name="Delcour J."/>
            <person name="Goffeau A."/>
            <person name="Hols P."/>
        </authorList>
    </citation>
    <scope>NUCLEOTIDE SEQUENCE [LARGE SCALE GENOMIC DNA]</scope>
    <source>
        <strain>CNRZ 1066</strain>
    </source>
</reference>
<organism>
    <name type="scientific">Streptococcus thermophilus (strain CNRZ 1066)</name>
    <dbReference type="NCBI Taxonomy" id="299768"/>
    <lineage>
        <taxon>Bacteria</taxon>
        <taxon>Bacillati</taxon>
        <taxon>Bacillota</taxon>
        <taxon>Bacilli</taxon>
        <taxon>Lactobacillales</taxon>
        <taxon>Streptococcaceae</taxon>
        <taxon>Streptococcus</taxon>
    </lineage>
</organism>
<comment type="function">
    <text evidence="3">Purine salvage pathway enzyme that catalyzes the transfer of the ribosyl-5-phosphate group from 5-phospho-alpha-D-ribose 1-diphosphate (PRPP) to the N9 position of the 6-oxopurines hypoxanthine and guanine to form the corresponding ribonucleotides IMP (inosine 5'-monophosphate) and GMP (guanosine 5'-monophosphate), with the release of PPi.</text>
</comment>
<comment type="catalytic activity">
    <reaction evidence="3">
        <text>IMP + diphosphate = hypoxanthine + 5-phospho-alpha-D-ribose 1-diphosphate</text>
        <dbReference type="Rhea" id="RHEA:17973"/>
        <dbReference type="ChEBI" id="CHEBI:17368"/>
        <dbReference type="ChEBI" id="CHEBI:33019"/>
        <dbReference type="ChEBI" id="CHEBI:58017"/>
        <dbReference type="ChEBI" id="CHEBI:58053"/>
        <dbReference type="EC" id="2.4.2.8"/>
    </reaction>
    <physiologicalReaction direction="right-to-left" evidence="3">
        <dbReference type="Rhea" id="RHEA:17975"/>
    </physiologicalReaction>
</comment>
<comment type="catalytic activity">
    <reaction evidence="3">
        <text>GMP + diphosphate = guanine + 5-phospho-alpha-D-ribose 1-diphosphate</text>
        <dbReference type="Rhea" id="RHEA:25424"/>
        <dbReference type="ChEBI" id="CHEBI:16235"/>
        <dbReference type="ChEBI" id="CHEBI:33019"/>
        <dbReference type="ChEBI" id="CHEBI:58017"/>
        <dbReference type="ChEBI" id="CHEBI:58115"/>
        <dbReference type="EC" id="2.4.2.8"/>
    </reaction>
    <physiologicalReaction direction="right-to-left" evidence="3">
        <dbReference type="Rhea" id="RHEA:25426"/>
    </physiologicalReaction>
</comment>
<comment type="cofactor">
    <cofactor evidence="3">
        <name>Mg(2+)</name>
        <dbReference type="ChEBI" id="CHEBI:18420"/>
    </cofactor>
</comment>
<comment type="pathway">
    <text evidence="3">Purine metabolism; IMP biosynthesis via salvage pathway; IMP from hypoxanthine: step 1/1.</text>
</comment>
<comment type="pathway">
    <text evidence="3">Purine metabolism; GMP biosynthesis via salvage pathway; GMP from guanine: step 1/1.</text>
</comment>
<comment type="subcellular location">
    <subcellularLocation>
        <location evidence="1">Cytoplasm</location>
    </subcellularLocation>
</comment>
<comment type="similarity">
    <text evidence="4">Belongs to the purine/pyrimidine phosphoribosyltransferase family.</text>
</comment>
<protein>
    <recommendedName>
        <fullName>Hypoxanthine-guanine phosphoribosyltransferase</fullName>
        <shortName>HGPRT</shortName>
        <shortName>HGPRTase</shortName>
        <ecNumber evidence="3">2.4.2.8</ecNumber>
    </recommendedName>
</protein>
<accession>Q5M216</accession>
<proteinExistence type="inferred from homology"/>